<gene>
    <name type="ORF">BC1</name>
    <name type="ORF">BL1</name>
</gene>
<sequence>MNSQLVNPPHAFNYIESQRDEYQLSHDLTEIILQFPSTAAQLTARLSRSCMKIDHCVIEYRQQVPINATGSVIVEIHDKRMTDNESLQASWTFPLRCNIDLHYFSASFFSLKDPIPWKLYYRVSDTNVHQRTHFAKFKGKLKLSTAKHSVDIPFRAPTVKILSKQFTDKDVDFSHVDYGRWERKPIRCASMSRVGLRGPIEIRPGESWASRSTIGVGQSEGESEIENELHTYRDLQRLGASVLDPGESASIVGANMAQSNITMSVAQLNELVRTTVQECIKSNCNSSQPKNFK</sequence>
<feature type="chain" id="PRO_0000222256" description="Movement protein BC1">
    <location>
        <begin position="1"/>
        <end position="293"/>
    </location>
</feature>
<organism>
    <name type="scientific">Potato yellow mosaic virus (isolate Venezuela)</name>
    <name type="common">PYMV</name>
    <dbReference type="NCBI Taxonomy" id="223310"/>
    <lineage>
        <taxon>Viruses</taxon>
        <taxon>Monodnaviria</taxon>
        <taxon>Shotokuvirae</taxon>
        <taxon>Cressdnaviricota</taxon>
        <taxon>Repensiviricetes</taxon>
        <taxon>Geplafuvirales</taxon>
        <taxon>Geminiviridae</taxon>
        <taxon>Begomovirus</taxon>
        <taxon>Potato yellow mosaic virus</taxon>
    </lineage>
</organism>
<keyword id="KW-0238">DNA-binding</keyword>
<keyword id="KW-1032">Host cell membrane</keyword>
<keyword id="KW-1038">Host endoplasmic reticulum</keyword>
<keyword id="KW-1043">Host membrane</keyword>
<keyword id="KW-1044">Host microsome</keyword>
<keyword id="KW-0472">Membrane</keyword>
<keyword id="KW-0597">Phosphoprotein</keyword>
<keyword id="KW-1185">Reference proteome</keyword>
<keyword id="KW-0813">Transport</keyword>
<keyword id="KW-0916">Viral movement protein</keyword>
<evidence type="ECO:0000250" key="1"/>
<evidence type="ECO:0000305" key="2"/>
<name>MVP_PYMVV</name>
<organismHost>
    <name type="scientific">Solanum tuberosum</name>
    <name type="common">Potato</name>
    <dbReference type="NCBI Taxonomy" id="4113"/>
</organismHost>
<comment type="function">
    <text evidence="1">Transports viral genome to neighboring plant cells directly through plasmosdesmata, without any budding. The movement protein allows efficient cell to cell propagation, by bypassing the host cell wall barrier. Begomovirus genome is shuttled out of nucleus by Nuclear shuttle protein (NSP) and the movement protein transports the DNA-NSP complex to cell plasmodesmata and facilitates further movement across the cell wall (By similarity).</text>
</comment>
<comment type="subunit">
    <text evidence="1">Binds to dimeric supercoiled plasmid DNA.</text>
</comment>
<comment type="subcellular location">
    <subcellularLocation>
        <location evidence="1">Host cell membrane</location>
        <topology evidence="1">Peripheral membrane protein</topology>
        <orientation evidence="1">Cytoplasmic side</orientation>
    </subcellularLocation>
    <subcellularLocation>
        <location evidence="1">Host microsome membrane</location>
        <topology evidence="1">Peripheral membrane protein</topology>
        <orientation evidence="1">Cytoplasmic side</orientation>
    </subcellularLocation>
    <subcellularLocation>
        <location evidence="1">Host endoplasmic reticulum membrane</location>
        <topology evidence="1">Peripheral membrane protein</topology>
        <orientation evidence="1">Cytoplasmic side</orientation>
    </subcellularLocation>
    <text evidence="1">Found on ER-derived vesicles.</text>
</comment>
<comment type="PTM">
    <text evidence="1">Phosphorylated.</text>
</comment>
<comment type="similarity">
    <text evidence="2">Belongs to the begomovirus movement protein BC1 family.</text>
</comment>
<accession>P27267</accession>
<proteinExistence type="inferred from homology"/>
<reference key="1">
    <citation type="journal article" date="1991" name="J. Gen. Virol.">
        <title>The nucleotide sequence of the infectious cloned DNA components of potato yellow mosaic virus.</title>
        <authorList>
            <person name="Coutts R.H.A."/>
            <person name="Coffin R.S."/>
            <person name="Roberts E.J.F."/>
            <person name="Hamilton W.D.O."/>
        </authorList>
    </citation>
    <scope>NUCLEOTIDE SEQUENCE [GENOMIC DNA]</scope>
</reference>
<protein>
    <recommendedName>
        <fullName>Movement protein BC1</fullName>
    </recommendedName>
    <alternativeName>
        <fullName>Movement protein BL1</fullName>
    </alternativeName>
</protein>
<dbReference type="EMBL" id="D00941">
    <property type="protein sequence ID" value="BAA00784.1"/>
    <property type="molecule type" value="Genomic_DNA"/>
</dbReference>
<dbReference type="PIR" id="JU0362">
    <property type="entry name" value="QQCVPY"/>
</dbReference>
<dbReference type="RefSeq" id="NP_047242.1">
    <property type="nucleotide sequence ID" value="NC_001935.1"/>
</dbReference>
<dbReference type="GeneID" id="956392"/>
<dbReference type="KEGG" id="vg:956392"/>
<dbReference type="Proteomes" id="UP000006828">
    <property type="component" value="Genome"/>
</dbReference>
<dbReference type="GO" id="GO:0044167">
    <property type="term" value="C:host cell endoplasmic reticulum membrane"/>
    <property type="evidence" value="ECO:0007669"/>
    <property type="project" value="UniProtKB-SubCell"/>
</dbReference>
<dbReference type="GO" id="GO:0020002">
    <property type="term" value="C:host cell plasma membrane"/>
    <property type="evidence" value="ECO:0007669"/>
    <property type="project" value="UniProtKB-SubCell"/>
</dbReference>
<dbReference type="GO" id="GO:0016020">
    <property type="term" value="C:membrane"/>
    <property type="evidence" value="ECO:0007669"/>
    <property type="project" value="UniProtKB-KW"/>
</dbReference>
<dbReference type="GO" id="GO:0003677">
    <property type="term" value="F:DNA binding"/>
    <property type="evidence" value="ECO:0007669"/>
    <property type="project" value="UniProtKB-KW"/>
</dbReference>
<dbReference type="GO" id="GO:0046740">
    <property type="term" value="P:transport of virus in host, cell to cell"/>
    <property type="evidence" value="ECO:0007669"/>
    <property type="project" value="UniProtKB-KW"/>
</dbReference>
<dbReference type="InterPro" id="IPR000211">
    <property type="entry name" value="Gemini_BL"/>
</dbReference>
<dbReference type="Pfam" id="PF00845">
    <property type="entry name" value="Gemini_BL1"/>
    <property type="match status" value="1"/>
</dbReference>